<organism>
    <name type="scientific">Narcissus elegans</name>
    <name type="common">Daffodil</name>
    <name type="synonym">Hermione elegans</name>
    <dbReference type="NCBI Taxonomy" id="54847"/>
    <lineage>
        <taxon>Eukaryota</taxon>
        <taxon>Viridiplantae</taxon>
        <taxon>Streptophyta</taxon>
        <taxon>Embryophyta</taxon>
        <taxon>Tracheophyta</taxon>
        <taxon>Spermatophyta</taxon>
        <taxon>Magnoliopsida</taxon>
        <taxon>Liliopsida</taxon>
        <taxon>Asparagales</taxon>
        <taxon>Amaryllidaceae</taxon>
        <taxon>Amaryllidoideae</taxon>
        <taxon>Narcissus</taxon>
    </lineage>
</organism>
<comment type="function">
    <text evidence="1">This b-type cytochrome is tightly associated with the reaction center of photosystem II (PSII). PSII is a light-driven water:plastoquinone oxidoreductase that uses light energy to abstract electrons from H(2)O, generating O(2) and a proton gradient subsequently used for ATP formation. It consists of a core antenna complex that captures photons, and an electron transfer chain that converts photonic excitation into a charge separation.</text>
</comment>
<comment type="cofactor">
    <cofactor evidence="1">
        <name>heme b</name>
        <dbReference type="ChEBI" id="CHEBI:60344"/>
    </cofactor>
    <text evidence="1">With its partner (PsbE) binds heme. PSII binds additional chlorophylls, carotenoids and specific lipids.</text>
</comment>
<comment type="subunit">
    <text evidence="1">Heterodimer of an alpha subunit and a beta subunit. PSII is composed of 1 copy each of membrane proteins PsbA, PsbB, PsbC, PsbD, PsbE, PsbF, PsbH, PsbI, PsbJ, PsbK, PsbL, PsbM, PsbT, PsbX, PsbY, PsbZ, Psb30/Ycf12, at least 3 peripheral proteins of the oxygen-evolving complex and a large number of cofactors. It forms dimeric complexes.</text>
</comment>
<comment type="subcellular location">
    <subcellularLocation>
        <location evidence="1">Plastid</location>
        <location evidence="1">Chloroplast thylakoid membrane</location>
        <topology evidence="1">Single-pass membrane protein</topology>
    </subcellularLocation>
</comment>
<comment type="similarity">
    <text evidence="1">Belongs to the PsbE/PsbF family.</text>
</comment>
<protein>
    <recommendedName>
        <fullName evidence="1">Cytochrome b559 subunit beta</fullName>
    </recommendedName>
    <alternativeName>
        <fullName evidence="1">PSII reaction center subunit VI</fullName>
    </alternativeName>
</protein>
<accession>Q67H89</accession>
<name>PSBF_NAREL</name>
<geneLocation type="chloroplast"/>
<reference key="1">
    <citation type="submission" date="2002-09" db="EMBL/GenBank/DDBJ databases">
        <title>Phylogenetic relationships among the major lineages of Asparagales based on a large chloroplast data set.</title>
        <authorList>
            <person name="McPherson M.A."/>
            <person name="Rai H.S."/>
            <person name="Wong W.A."/>
            <person name="Graham S.W."/>
        </authorList>
    </citation>
    <scope>NUCLEOTIDE SEQUENCE [GENOMIC DNA]</scope>
</reference>
<dbReference type="EMBL" id="AY147591">
    <property type="protein sequence ID" value="AAN32465.1"/>
    <property type="molecule type" value="Genomic_DNA"/>
</dbReference>
<dbReference type="SMR" id="Q67H89"/>
<dbReference type="GO" id="GO:0009535">
    <property type="term" value="C:chloroplast thylakoid membrane"/>
    <property type="evidence" value="ECO:0007669"/>
    <property type="project" value="UniProtKB-SubCell"/>
</dbReference>
<dbReference type="GO" id="GO:0009539">
    <property type="term" value="C:photosystem II reaction center"/>
    <property type="evidence" value="ECO:0007669"/>
    <property type="project" value="InterPro"/>
</dbReference>
<dbReference type="GO" id="GO:0009055">
    <property type="term" value="F:electron transfer activity"/>
    <property type="evidence" value="ECO:0007669"/>
    <property type="project" value="UniProtKB-UniRule"/>
</dbReference>
<dbReference type="GO" id="GO:0020037">
    <property type="term" value="F:heme binding"/>
    <property type="evidence" value="ECO:0007669"/>
    <property type="project" value="InterPro"/>
</dbReference>
<dbReference type="GO" id="GO:0005506">
    <property type="term" value="F:iron ion binding"/>
    <property type="evidence" value="ECO:0007669"/>
    <property type="project" value="UniProtKB-UniRule"/>
</dbReference>
<dbReference type="GO" id="GO:0009767">
    <property type="term" value="P:photosynthetic electron transport chain"/>
    <property type="evidence" value="ECO:0007669"/>
    <property type="project" value="InterPro"/>
</dbReference>
<dbReference type="HAMAP" id="MF_00643">
    <property type="entry name" value="PSII_PsbF"/>
    <property type="match status" value="1"/>
</dbReference>
<dbReference type="InterPro" id="IPR006241">
    <property type="entry name" value="PSII_cyt_b559_bsu"/>
</dbReference>
<dbReference type="InterPro" id="IPR006216">
    <property type="entry name" value="PSII_cyt_b559_CS"/>
</dbReference>
<dbReference type="InterPro" id="IPR013081">
    <property type="entry name" value="PSII_cyt_b559_N"/>
</dbReference>
<dbReference type="NCBIfam" id="TIGR01333">
    <property type="entry name" value="cyt_b559_beta"/>
    <property type="match status" value="1"/>
</dbReference>
<dbReference type="Pfam" id="PF00283">
    <property type="entry name" value="Cytochrom_B559"/>
    <property type="match status" value="1"/>
</dbReference>
<dbReference type="PIRSF" id="PIRSF000037">
    <property type="entry name" value="PsbF"/>
    <property type="match status" value="1"/>
</dbReference>
<dbReference type="SUPFAM" id="SSF161045">
    <property type="entry name" value="Cytochrome b559 subunits"/>
    <property type="match status" value="1"/>
</dbReference>
<dbReference type="PROSITE" id="PS00537">
    <property type="entry name" value="CYTOCHROME_B559"/>
    <property type="match status" value="1"/>
</dbReference>
<sequence length="39" mass="4424">MTIDRTYPIFTVRWLAVHGLAVPTVSFLGSISAMQFIQR</sequence>
<feature type="chain" id="PRO_0000233645" description="Cytochrome b559 subunit beta">
    <location>
        <begin position="1"/>
        <end position="39"/>
    </location>
</feature>
<feature type="transmembrane region" description="Helical" evidence="1">
    <location>
        <begin position="14"/>
        <end position="30"/>
    </location>
</feature>
<feature type="binding site" description="axial binding residue" evidence="1">
    <location>
        <position position="18"/>
    </location>
    <ligand>
        <name>heme</name>
        <dbReference type="ChEBI" id="CHEBI:30413"/>
        <note>ligand shared with alpha subunit</note>
    </ligand>
    <ligandPart>
        <name>Fe</name>
        <dbReference type="ChEBI" id="CHEBI:18248"/>
    </ligandPart>
</feature>
<proteinExistence type="inferred from homology"/>
<keyword id="KW-0150">Chloroplast</keyword>
<keyword id="KW-0249">Electron transport</keyword>
<keyword id="KW-0349">Heme</keyword>
<keyword id="KW-0408">Iron</keyword>
<keyword id="KW-0472">Membrane</keyword>
<keyword id="KW-0479">Metal-binding</keyword>
<keyword id="KW-0602">Photosynthesis</keyword>
<keyword id="KW-0604">Photosystem II</keyword>
<keyword id="KW-0934">Plastid</keyword>
<keyword id="KW-0793">Thylakoid</keyword>
<keyword id="KW-0812">Transmembrane</keyword>
<keyword id="KW-1133">Transmembrane helix</keyword>
<keyword id="KW-0813">Transport</keyword>
<evidence type="ECO:0000255" key="1">
    <source>
        <dbReference type="HAMAP-Rule" id="MF_00643"/>
    </source>
</evidence>
<gene>
    <name evidence="1" type="primary">psbF</name>
</gene>